<sequence length="205" mass="23245">MVFLSWGRPSSEQQQQVINKTGTFNYDNKYRGVSSRSIAKLKEDSEIDKDGFLINHARVLVGSGRESYEKGKKALQNWKHFGMDWAFVDPATPVETGKKFCICVKEVLPWVMLPLQVVYVDESRKSRKGPAHFGYGSGTLQGHLLAGEEKFSIELDGNGEVWYEITSFSKPAHFLSFLGYPYVKLRQKHFARHSSEAVLKHVNAS</sequence>
<gene>
    <name type="ordered locus">At2g17695</name>
    <name type="ORF">T17A5.13</name>
</gene>
<keyword id="KW-1185">Reference proteome</keyword>
<reference key="1">
    <citation type="journal article" date="1999" name="Nature">
        <title>Sequence and analysis of chromosome 2 of the plant Arabidopsis thaliana.</title>
        <authorList>
            <person name="Lin X."/>
            <person name="Kaul S."/>
            <person name="Rounsley S.D."/>
            <person name="Shea T.P."/>
            <person name="Benito M.-I."/>
            <person name="Town C.D."/>
            <person name="Fujii C.Y."/>
            <person name="Mason T.M."/>
            <person name="Bowman C.L."/>
            <person name="Barnstead M.E."/>
            <person name="Feldblyum T.V."/>
            <person name="Buell C.R."/>
            <person name="Ketchum K.A."/>
            <person name="Lee J.J."/>
            <person name="Ronning C.M."/>
            <person name="Koo H.L."/>
            <person name="Moffat K.S."/>
            <person name="Cronin L.A."/>
            <person name="Shen M."/>
            <person name="Pai G."/>
            <person name="Van Aken S."/>
            <person name="Umayam L."/>
            <person name="Tallon L.J."/>
            <person name="Gill J.E."/>
            <person name="Adams M.D."/>
            <person name="Carrera A.J."/>
            <person name="Creasy T.H."/>
            <person name="Goodman H.M."/>
            <person name="Somerville C.R."/>
            <person name="Copenhaver G.P."/>
            <person name="Preuss D."/>
            <person name="Nierman W.C."/>
            <person name="White O."/>
            <person name="Eisen J.A."/>
            <person name="Salzberg S.L."/>
            <person name="Fraser C.M."/>
            <person name="Venter J.C."/>
        </authorList>
    </citation>
    <scope>NUCLEOTIDE SEQUENCE [LARGE SCALE GENOMIC DNA]</scope>
    <source>
        <strain>cv. Columbia</strain>
    </source>
</reference>
<reference key="2">
    <citation type="journal article" date="2017" name="Plant J.">
        <title>Araport11: a complete reannotation of the Arabidopsis thaliana reference genome.</title>
        <authorList>
            <person name="Cheng C.Y."/>
            <person name="Krishnakumar V."/>
            <person name="Chan A.P."/>
            <person name="Thibaud-Nissen F."/>
            <person name="Schobel S."/>
            <person name="Town C.D."/>
        </authorList>
    </citation>
    <scope>GENOME REANNOTATION</scope>
    <source>
        <strain>cv. Columbia</strain>
    </source>
</reference>
<reference key="3">
    <citation type="journal article" date="2002" name="Science">
        <title>Functional annotation of a full-length Arabidopsis cDNA collection.</title>
        <authorList>
            <person name="Seki M."/>
            <person name="Narusaka M."/>
            <person name="Kamiya A."/>
            <person name="Ishida J."/>
            <person name="Satou M."/>
            <person name="Sakurai T."/>
            <person name="Nakajima M."/>
            <person name="Enju A."/>
            <person name="Akiyama K."/>
            <person name="Oono Y."/>
            <person name="Muramatsu M."/>
            <person name="Hayashizaki Y."/>
            <person name="Kawai J."/>
            <person name="Carninci P."/>
            <person name="Itoh M."/>
            <person name="Ishii Y."/>
            <person name="Arakawa T."/>
            <person name="Shibata K."/>
            <person name="Shinagawa A."/>
            <person name="Shinozaki K."/>
        </authorList>
    </citation>
    <scope>NUCLEOTIDE SEQUENCE [LARGE SCALE MRNA]</scope>
    <source>
        <strain>cv. Columbia</strain>
    </source>
</reference>
<reference key="4">
    <citation type="journal article" date="2003" name="Science">
        <title>Empirical analysis of transcriptional activity in the Arabidopsis genome.</title>
        <authorList>
            <person name="Yamada K."/>
            <person name="Lim J."/>
            <person name="Dale J.M."/>
            <person name="Chen H."/>
            <person name="Shinn P."/>
            <person name="Palm C.J."/>
            <person name="Southwick A.M."/>
            <person name="Wu H.C."/>
            <person name="Kim C.J."/>
            <person name="Nguyen M."/>
            <person name="Pham P.K."/>
            <person name="Cheuk R.F."/>
            <person name="Karlin-Newmann G."/>
            <person name="Liu S.X."/>
            <person name="Lam B."/>
            <person name="Sakano H."/>
            <person name="Wu T."/>
            <person name="Yu G."/>
            <person name="Miranda M."/>
            <person name="Quach H.L."/>
            <person name="Tripp M."/>
            <person name="Chang C.H."/>
            <person name="Lee J.M."/>
            <person name="Toriumi M.J."/>
            <person name="Chan M.M."/>
            <person name="Tang C.C."/>
            <person name="Onodera C.S."/>
            <person name="Deng J.M."/>
            <person name="Akiyama K."/>
            <person name="Ansari Y."/>
            <person name="Arakawa T."/>
            <person name="Banh J."/>
            <person name="Banno F."/>
            <person name="Bowser L."/>
            <person name="Brooks S.Y."/>
            <person name="Carninci P."/>
            <person name="Chao Q."/>
            <person name="Choy N."/>
            <person name="Enju A."/>
            <person name="Goldsmith A.D."/>
            <person name="Gurjal M."/>
            <person name="Hansen N.F."/>
            <person name="Hayashizaki Y."/>
            <person name="Johnson-Hopson C."/>
            <person name="Hsuan V.W."/>
            <person name="Iida K."/>
            <person name="Karnes M."/>
            <person name="Khan S."/>
            <person name="Koesema E."/>
            <person name="Ishida J."/>
            <person name="Jiang P.X."/>
            <person name="Jones T."/>
            <person name="Kawai J."/>
            <person name="Kamiya A."/>
            <person name="Meyers C."/>
            <person name="Nakajima M."/>
            <person name="Narusaka M."/>
            <person name="Seki M."/>
            <person name="Sakurai T."/>
            <person name="Satou M."/>
            <person name="Tamse R."/>
            <person name="Vaysberg M."/>
            <person name="Wallender E.K."/>
            <person name="Wong C."/>
            <person name="Yamamura Y."/>
            <person name="Yuan S."/>
            <person name="Shinozaki K."/>
            <person name="Davis R.W."/>
            <person name="Theologis A."/>
            <person name="Ecker J.R."/>
        </authorList>
    </citation>
    <scope>NUCLEOTIDE SEQUENCE [LARGE SCALE MRNA]</scope>
    <source>
        <strain>cv. Columbia</strain>
    </source>
</reference>
<protein>
    <recommendedName>
        <fullName>UPF0548 protein At2g17695</fullName>
    </recommendedName>
</protein>
<comment type="similarity">
    <text evidence="1">Belongs to the UPF0548 family.</text>
</comment>
<evidence type="ECO:0000305" key="1"/>
<organism>
    <name type="scientific">Arabidopsis thaliana</name>
    <name type="common">Mouse-ear cress</name>
    <dbReference type="NCBI Taxonomy" id="3702"/>
    <lineage>
        <taxon>Eukaryota</taxon>
        <taxon>Viridiplantae</taxon>
        <taxon>Streptophyta</taxon>
        <taxon>Embryophyta</taxon>
        <taxon>Tracheophyta</taxon>
        <taxon>Spermatophyta</taxon>
        <taxon>Magnoliopsida</taxon>
        <taxon>eudicotyledons</taxon>
        <taxon>Gunneridae</taxon>
        <taxon>Pentapetalae</taxon>
        <taxon>rosids</taxon>
        <taxon>malvids</taxon>
        <taxon>Brassicales</taxon>
        <taxon>Brassicaceae</taxon>
        <taxon>Camelineae</taxon>
        <taxon>Arabidopsis</taxon>
    </lineage>
</organism>
<accession>Q8GXB1</accession>
<dbReference type="EMBL" id="CP002685">
    <property type="protein sequence ID" value="AEC06667.1"/>
    <property type="molecule type" value="Genomic_DNA"/>
</dbReference>
<dbReference type="EMBL" id="CP002685">
    <property type="protein sequence ID" value="AEC06668.1"/>
    <property type="molecule type" value="Genomic_DNA"/>
</dbReference>
<dbReference type="EMBL" id="AK118331">
    <property type="protein sequence ID" value="BAC42945.1"/>
    <property type="molecule type" value="mRNA"/>
</dbReference>
<dbReference type="EMBL" id="BT005572">
    <property type="protein sequence ID" value="AAO63992.1"/>
    <property type="molecule type" value="mRNA"/>
</dbReference>
<dbReference type="RefSeq" id="NP_001118341.1">
    <property type="nucleotide sequence ID" value="NM_001124869.2"/>
</dbReference>
<dbReference type="RefSeq" id="NP_849965.1">
    <property type="nucleotide sequence ID" value="NM_179634.4"/>
</dbReference>
<dbReference type="FunCoup" id="Q8GXB1">
    <property type="interactions" value="510"/>
</dbReference>
<dbReference type="STRING" id="3702.Q8GXB1"/>
<dbReference type="iPTMnet" id="Q8GXB1"/>
<dbReference type="PaxDb" id="3702-AT2G17695.1"/>
<dbReference type="ProteomicsDB" id="242608"/>
<dbReference type="EnsemblPlants" id="AT2G17695.1">
    <property type="protein sequence ID" value="AT2G17695.1"/>
    <property type="gene ID" value="AT2G17695"/>
</dbReference>
<dbReference type="EnsemblPlants" id="AT2G17695.2">
    <property type="protein sequence ID" value="AT2G17695.2"/>
    <property type="gene ID" value="AT2G17695"/>
</dbReference>
<dbReference type="GeneID" id="816277"/>
<dbReference type="Gramene" id="AT2G17695.1">
    <property type="protein sequence ID" value="AT2G17695.1"/>
    <property type="gene ID" value="AT2G17695"/>
</dbReference>
<dbReference type="Gramene" id="AT2G17695.2">
    <property type="protein sequence ID" value="AT2G17695.2"/>
    <property type="gene ID" value="AT2G17695"/>
</dbReference>
<dbReference type="KEGG" id="ath:AT2G17695"/>
<dbReference type="Araport" id="AT2G17695"/>
<dbReference type="TAIR" id="AT2G17695"/>
<dbReference type="eggNOG" id="ENOG502QTWG">
    <property type="taxonomic scope" value="Eukaryota"/>
</dbReference>
<dbReference type="HOGENOM" id="CLU_080841_0_1_1"/>
<dbReference type="InParanoid" id="Q8GXB1"/>
<dbReference type="OMA" id="CVKEFFP"/>
<dbReference type="OrthoDB" id="46304at2759"/>
<dbReference type="PhylomeDB" id="Q8GXB1"/>
<dbReference type="PRO" id="PR:Q8GXB1"/>
<dbReference type="Proteomes" id="UP000006548">
    <property type="component" value="Chromosome 2"/>
</dbReference>
<dbReference type="ExpressionAtlas" id="Q8GXB1">
    <property type="expression patterns" value="baseline and differential"/>
</dbReference>
<dbReference type="GO" id="GO:0009507">
    <property type="term" value="C:chloroplast"/>
    <property type="evidence" value="ECO:0007005"/>
    <property type="project" value="TAIR"/>
</dbReference>
<dbReference type="GO" id="GO:0009941">
    <property type="term" value="C:chloroplast envelope"/>
    <property type="evidence" value="ECO:0007005"/>
    <property type="project" value="TAIR"/>
</dbReference>
<dbReference type="GO" id="GO:0005739">
    <property type="term" value="C:mitochondrion"/>
    <property type="evidence" value="ECO:0007005"/>
    <property type="project" value="TAIR"/>
</dbReference>
<dbReference type="InterPro" id="IPR018960">
    <property type="entry name" value="DUF1990"/>
</dbReference>
<dbReference type="PANTHER" id="PTHR34202">
    <property type="entry name" value="UPF0548 PROTEIN"/>
    <property type="match status" value="1"/>
</dbReference>
<dbReference type="PANTHER" id="PTHR34202:SF1">
    <property type="entry name" value="UPF0548 PROTEIN"/>
    <property type="match status" value="1"/>
</dbReference>
<dbReference type="Pfam" id="PF09348">
    <property type="entry name" value="DUF1990"/>
    <property type="match status" value="1"/>
</dbReference>
<name>U548_ARATH</name>
<proteinExistence type="evidence at transcript level"/>
<feature type="chain" id="PRO_0000326875" description="UPF0548 protein At2g17695">
    <location>
        <begin position="1"/>
        <end position="205"/>
    </location>
</feature>